<reference key="1">
    <citation type="journal article" date="2002" name="Proc. Natl. Acad. Sci. U.S.A.">
        <title>The genome sequence of the facultative intracellular pathogen Brucella melitensis.</title>
        <authorList>
            <person name="DelVecchio V.G."/>
            <person name="Kapatral V."/>
            <person name="Redkar R.J."/>
            <person name="Patra G."/>
            <person name="Mujer C."/>
            <person name="Los T."/>
            <person name="Ivanova N."/>
            <person name="Anderson I."/>
            <person name="Bhattacharyya A."/>
            <person name="Lykidis A."/>
            <person name="Reznik G."/>
            <person name="Jablonski L."/>
            <person name="Larsen N."/>
            <person name="D'Souza M."/>
            <person name="Bernal A."/>
            <person name="Mazur M."/>
            <person name="Goltsman E."/>
            <person name="Selkov E."/>
            <person name="Elzer P.H."/>
            <person name="Hagius S."/>
            <person name="O'Callaghan D."/>
            <person name="Letesson J.-J."/>
            <person name="Haselkorn R."/>
            <person name="Kyrpides N.C."/>
            <person name="Overbeek R."/>
        </authorList>
    </citation>
    <scope>NUCLEOTIDE SEQUENCE [LARGE SCALE GENOMIC DNA]</scope>
    <source>
        <strain>ATCC 23456 / CCUG 17765 / NCTC 10094 / 16M</strain>
    </source>
</reference>
<dbReference type="EC" id="2.8.1.10" evidence="1"/>
<dbReference type="EMBL" id="AE008917">
    <property type="protein sequence ID" value="AAL52916.1"/>
    <property type="status" value="ALT_INIT"/>
    <property type="molecule type" value="Genomic_DNA"/>
</dbReference>
<dbReference type="PIR" id="AI3468">
    <property type="entry name" value="AI3468"/>
</dbReference>
<dbReference type="RefSeq" id="WP_004684703.1">
    <property type="nucleotide sequence ID" value="NZ_GG703778.1"/>
</dbReference>
<dbReference type="SMR" id="Q8YEZ2"/>
<dbReference type="GeneID" id="29594607"/>
<dbReference type="KEGG" id="bme:BMEI1735"/>
<dbReference type="KEGG" id="bmel:DK63_1751"/>
<dbReference type="PATRIC" id="fig|224914.52.peg.1850"/>
<dbReference type="eggNOG" id="COG2022">
    <property type="taxonomic scope" value="Bacteria"/>
</dbReference>
<dbReference type="PhylomeDB" id="Q8YEZ2"/>
<dbReference type="UniPathway" id="UPA00060"/>
<dbReference type="Proteomes" id="UP000000419">
    <property type="component" value="Chromosome I"/>
</dbReference>
<dbReference type="GO" id="GO:0005737">
    <property type="term" value="C:cytoplasm"/>
    <property type="evidence" value="ECO:0007669"/>
    <property type="project" value="UniProtKB-SubCell"/>
</dbReference>
<dbReference type="GO" id="GO:1990107">
    <property type="term" value="F:thiazole synthase activity"/>
    <property type="evidence" value="ECO:0007669"/>
    <property type="project" value="UniProtKB-EC"/>
</dbReference>
<dbReference type="GO" id="GO:0009229">
    <property type="term" value="P:thiamine diphosphate biosynthetic process"/>
    <property type="evidence" value="ECO:0007669"/>
    <property type="project" value="UniProtKB-UniRule"/>
</dbReference>
<dbReference type="CDD" id="cd04728">
    <property type="entry name" value="ThiG"/>
    <property type="match status" value="1"/>
</dbReference>
<dbReference type="Gene3D" id="3.20.20.70">
    <property type="entry name" value="Aldolase class I"/>
    <property type="match status" value="1"/>
</dbReference>
<dbReference type="HAMAP" id="MF_00443">
    <property type="entry name" value="ThiG"/>
    <property type="match status" value="1"/>
</dbReference>
<dbReference type="InterPro" id="IPR013785">
    <property type="entry name" value="Aldolase_TIM"/>
</dbReference>
<dbReference type="InterPro" id="IPR033983">
    <property type="entry name" value="Thiazole_synthase_ThiG"/>
</dbReference>
<dbReference type="InterPro" id="IPR008867">
    <property type="entry name" value="ThiG"/>
</dbReference>
<dbReference type="PANTHER" id="PTHR34266">
    <property type="entry name" value="THIAZOLE SYNTHASE"/>
    <property type="match status" value="1"/>
</dbReference>
<dbReference type="PANTHER" id="PTHR34266:SF2">
    <property type="entry name" value="THIAZOLE SYNTHASE"/>
    <property type="match status" value="1"/>
</dbReference>
<dbReference type="Pfam" id="PF05690">
    <property type="entry name" value="ThiG"/>
    <property type="match status" value="1"/>
</dbReference>
<dbReference type="SUPFAM" id="SSF110399">
    <property type="entry name" value="ThiG-like"/>
    <property type="match status" value="1"/>
</dbReference>
<comment type="function">
    <text evidence="1">Catalyzes the rearrangement of 1-deoxy-D-xylulose 5-phosphate (DXP) to produce the thiazole phosphate moiety of thiamine. Sulfur is provided by the thiocarboxylate moiety of the carrier protein ThiS. In vitro, sulfur can be provided by H(2)S.</text>
</comment>
<comment type="catalytic activity">
    <reaction evidence="1">
        <text>[ThiS sulfur-carrier protein]-C-terminal-Gly-aminoethanethioate + 2-iminoacetate + 1-deoxy-D-xylulose 5-phosphate = [ThiS sulfur-carrier protein]-C-terminal Gly-Gly + 2-[(2R,5Z)-2-carboxy-4-methylthiazol-5(2H)-ylidene]ethyl phosphate + 2 H2O + H(+)</text>
        <dbReference type="Rhea" id="RHEA:26297"/>
        <dbReference type="Rhea" id="RHEA-COMP:12909"/>
        <dbReference type="Rhea" id="RHEA-COMP:19908"/>
        <dbReference type="ChEBI" id="CHEBI:15377"/>
        <dbReference type="ChEBI" id="CHEBI:15378"/>
        <dbReference type="ChEBI" id="CHEBI:57792"/>
        <dbReference type="ChEBI" id="CHEBI:62899"/>
        <dbReference type="ChEBI" id="CHEBI:77846"/>
        <dbReference type="ChEBI" id="CHEBI:90778"/>
        <dbReference type="ChEBI" id="CHEBI:232372"/>
        <dbReference type="EC" id="2.8.1.10"/>
    </reaction>
</comment>
<comment type="pathway">
    <text evidence="1">Cofactor biosynthesis; thiamine diphosphate biosynthesis.</text>
</comment>
<comment type="subunit">
    <text evidence="1">Homotetramer. Forms heterodimers with either ThiH or ThiS.</text>
</comment>
<comment type="subcellular location">
    <subcellularLocation>
        <location evidence="1">Cytoplasm</location>
    </subcellularLocation>
</comment>
<comment type="similarity">
    <text evidence="1">Belongs to the ThiG family.</text>
</comment>
<comment type="sequence caution" evidence="2">
    <conflict type="erroneous initiation">
        <sequence resource="EMBL-CDS" id="AAL52916"/>
    </conflict>
</comment>
<protein>
    <recommendedName>
        <fullName evidence="1">Thiazole synthase</fullName>
        <ecNumber evidence="1">2.8.1.10</ecNumber>
    </recommendedName>
</protein>
<feature type="chain" id="PRO_0000162797" description="Thiazole synthase">
    <location>
        <begin position="1"/>
        <end position="256"/>
    </location>
</feature>
<feature type="active site" description="Schiff-base intermediate with DXP" evidence="1">
    <location>
        <position position="96"/>
    </location>
</feature>
<feature type="binding site" evidence="1">
    <location>
        <position position="157"/>
    </location>
    <ligand>
        <name>1-deoxy-D-xylulose 5-phosphate</name>
        <dbReference type="ChEBI" id="CHEBI:57792"/>
    </ligand>
</feature>
<feature type="binding site" evidence="1">
    <location>
        <begin position="184"/>
        <end position="185"/>
    </location>
    <ligand>
        <name>1-deoxy-D-xylulose 5-phosphate</name>
        <dbReference type="ChEBI" id="CHEBI:57792"/>
    </ligand>
</feature>
<feature type="binding site" evidence="1">
    <location>
        <begin position="206"/>
        <end position="207"/>
    </location>
    <ligand>
        <name>1-deoxy-D-xylulose 5-phosphate</name>
        <dbReference type="ChEBI" id="CHEBI:57792"/>
    </ligand>
</feature>
<gene>
    <name evidence="1" type="primary">thiG</name>
    <name type="ordered locus">BMEI1735</name>
</gene>
<proteinExistence type="inferred from homology"/>
<organism>
    <name type="scientific">Brucella melitensis biotype 1 (strain ATCC 23456 / CCUG 17765 / NCTC 10094 / 16M)</name>
    <dbReference type="NCBI Taxonomy" id="224914"/>
    <lineage>
        <taxon>Bacteria</taxon>
        <taxon>Pseudomonadati</taxon>
        <taxon>Pseudomonadota</taxon>
        <taxon>Alphaproteobacteria</taxon>
        <taxon>Hyphomicrobiales</taxon>
        <taxon>Brucellaceae</taxon>
        <taxon>Brucella/Ochrobactrum group</taxon>
        <taxon>Brucella</taxon>
    </lineage>
</organism>
<sequence length="256" mass="27355">MLEFYGKRFESRLLLGTAQYPSPSILADAVRASLSRIVTVSLRRESGEARAGQDFWALIKALGVAVLPNTAGCHTPREAITTAHMAREVFGTNWIKLEVIGDTDTLQPDPFGLVEAARILCDEGFEVFPYMNDDLIVAERLIEAGCKVLMPWGAPIGSGRGFNNPYALKTMRAHFPDIPLVVDAGIGVPSHAAAAMELGFDAVLINTAVAKAGDPAAMARAFALAVEAGRLAYEADPIEARDMASPSTPLLGKAFL</sequence>
<accession>Q8YEZ2</accession>
<name>THIG_BRUME</name>
<evidence type="ECO:0000255" key="1">
    <source>
        <dbReference type="HAMAP-Rule" id="MF_00443"/>
    </source>
</evidence>
<evidence type="ECO:0000305" key="2"/>
<keyword id="KW-0963">Cytoplasm</keyword>
<keyword id="KW-0704">Schiff base</keyword>
<keyword id="KW-0784">Thiamine biosynthesis</keyword>
<keyword id="KW-0808">Transferase</keyword>